<name>RLMM_ECO45</name>
<keyword id="KW-0963">Cytoplasm</keyword>
<keyword id="KW-0489">Methyltransferase</keyword>
<keyword id="KW-1185">Reference proteome</keyword>
<keyword id="KW-0698">rRNA processing</keyword>
<keyword id="KW-0949">S-adenosyl-L-methionine</keyword>
<keyword id="KW-0808">Transferase</keyword>
<comment type="function">
    <text evidence="1">Catalyzes the 2'-O-methylation at nucleotide C2498 in 23S rRNA.</text>
</comment>
<comment type="catalytic activity">
    <reaction evidence="1">
        <text>cytidine(2498) in 23S rRNA + S-adenosyl-L-methionine = 2'-O-methylcytidine(2498) in 23S rRNA + S-adenosyl-L-homocysteine + H(+)</text>
        <dbReference type="Rhea" id="RHEA:42788"/>
        <dbReference type="Rhea" id="RHEA-COMP:10244"/>
        <dbReference type="Rhea" id="RHEA-COMP:10245"/>
        <dbReference type="ChEBI" id="CHEBI:15378"/>
        <dbReference type="ChEBI" id="CHEBI:57856"/>
        <dbReference type="ChEBI" id="CHEBI:59789"/>
        <dbReference type="ChEBI" id="CHEBI:74495"/>
        <dbReference type="ChEBI" id="CHEBI:82748"/>
        <dbReference type="EC" id="2.1.1.186"/>
    </reaction>
</comment>
<comment type="subunit">
    <text evidence="1">Monomer.</text>
</comment>
<comment type="subcellular location">
    <subcellularLocation>
        <location evidence="1">Cytoplasm</location>
    </subcellularLocation>
</comment>
<comment type="similarity">
    <text evidence="1">Belongs to the class I-like SAM-binding methyltransferase superfamily. RNA methyltransferase RlmE family. RlmM subfamily.</text>
</comment>
<organism>
    <name type="scientific">Escherichia coli O45:K1 (strain S88 / ExPEC)</name>
    <dbReference type="NCBI Taxonomy" id="585035"/>
    <lineage>
        <taxon>Bacteria</taxon>
        <taxon>Pseudomonadati</taxon>
        <taxon>Pseudomonadota</taxon>
        <taxon>Gammaproteobacteria</taxon>
        <taxon>Enterobacterales</taxon>
        <taxon>Enterobacteriaceae</taxon>
        <taxon>Escherichia</taxon>
    </lineage>
</organism>
<accession>B7MLC7</accession>
<gene>
    <name evidence="1" type="primary">rlmM</name>
    <name type="ordered locus">ECS88_3075</name>
</gene>
<proteinExistence type="inferred from homology"/>
<sequence>MNKVVLLCRPGFEKECAAEITDKAGQREIFGFARVKENAGYVIYECYQPDDGDKLIRELPFSSLIFARQWFVVGELLQHLPPEDRITPIVGMLQGVVEKGGELRVEVADTNESKELLKFCRKFTVPLRAALRDAGVLANYETPKRPVVHVFFIAPGCCYTGYSYSSNNSPFYMGIPRLKFPADAPSRSTLKLEEAFHVFIPADEWDERLANGMWAVDLGACPGGWTYQLVKRNMWVYSVDNGPMAQSLMDTGQVTWLREDGFKFRPTCSNISWMVCDMVEKPAKVAALMAQWLVNGWCRETIFNLKLPMKKRYEEVSHNLAYIQAQLDEHGINAQIQARQLYHDREEVTVHVRRIWAAVGGRRDER</sequence>
<reference key="1">
    <citation type="journal article" date="2009" name="PLoS Genet.">
        <title>Organised genome dynamics in the Escherichia coli species results in highly diverse adaptive paths.</title>
        <authorList>
            <person name="Touchon M."/>
            <person name="Hoede C."/>
            <person name="Tenaillon O."/>
            <person name="Barbe V."/>
            <person name="Baeriswyl S."/>
            <person name="Bidet P."/>
            <person name="Bingen E."/>
            <person name="Bonacorsi S."/>
            <person name="Bouchier C."/>
            <person name="Bouvet O."/>
            <person name="Calteau A."/>
            <person name="Chiapello H."/>
            <person name="Clermont O."/>
            <person name="Cruveiller S."/>
            <person name="Danchin A."/>
            <person name="Diard M."/>
            <person name="Dossat C."/>
            <person name="Karoui M.E."/>
            <person name="Frapy E."/>
            <person name="Garry L."/>
            <person name="Ghigo J.M."/>
            <person name="Gilles A.M."/>
            <person name="Johnson J."/>
            <person name="Le Bouguenec C."/>
            <person name="Lescat M."/>
            <person name="Mangenot S."/>
            <person name="Martinez-Jehanne V."/>
            <person name="Matic I."/>
            <person name="Nassif X."/>
            <person name="Oztas S."/>
            <person name="Petit M.A."/>
            <person name="Pichon C."/>
            <person name="Rouy Z."/>
            <person name="Ruf C.S."/>
            <person name="Schneider D."/>
            <person name="Tourret J."/>
            <person name="Vacherie B."/>
            <person name="Vallenet D."/>
            <person name="Medigue C."/>
            <person name="Rocha E.P.C."/>
            <person name="Denamur E."/>
        </authorList>
    </citation>
    <scope>NUCLEOTIDE SEQUENCE [LARGE SCALE GENOMIC DNA]</scope>
    <source>
        <strain>S88 / ExPEC</strain>
    </source>
</reference>
<protein>
    <recommendedName>
        <fullName evidence="1">Ribosomal RNA large subunit methyltransferase M</fullName>
        <ecNumber evidence="1">2.1.1.186</ecNumber>
    </recommendedName>
    <alternativeName>
        <fullName evidence="1">23S rRNA (cytidine2498-2'-O)-methyltransferase</fullName>
    </alternativeName>
    <alternativeName>
        <fullName evidence="1">23S rRNA 2'-O-ribose methyltransferase RlmM</fullName>
    </alternativeName>
</protein>
<evidence type="ECO:0000255" key="1">
    <source>
        <dbReference type="HAMAP-Rule" id="MF_01551"/>
    </source>
</evidence>
<dbReference type="EC" id="2.1.1.186" evidence="1"/>
<dbReference type="EMBL" id="CU928161">
    <property type="protein sequence ID" value="CAR04316.1"/>
    <property type="molecule type" value="Genomic_DNA"/>
</dbReference>
<dbReference type="RefSeq" id="WP_001045527.1">
    <property type="nucleotide sequence ID" value="NC_011742.1"/>
</dbReference>
<dbReference type="SMR" id="B7MLC7"/>
<dbReference type="KEGG" id="ecz:ECS88_3075"/>
<dbReference type="HOGENOM" id="CLU_043780_0_0_6"/>
<dbReference type="Proteomes" id="UP000000747">
    <property type="component" value="Chromosome"/>
</dbReference>
<dbReference type="GO" id="GO:0005737">
    <property type="term" value="C:cytoplasm"/>
    <property type="evidence" value="ECO:0007669"/>
    <property type="project" value="UniProtKB-SubCell"/>
</dbReference>
<dbReference type="GO" id="GO:0008757">
    <property type="term" value="F:S-adenosylmethionine-dependent methyltransferase activity"/>
    <property type="evidence" value="ECO:0007669"/>
    <property type="project" value="UniProtKB-UniRule"/>
</dbReference>
<dbReference type="GO" id="GO:0032259">
    <property type="term" value="P:methylation"/>
    <property type="evidence" value="ECO:0007669"/>
    <property type="project" value="UniProtKB-KW"/>
</dbReference>
<dbReference type="GO" id="GO:0006364">
    <property type="term" value="P:rRNA processing"/>
    <property type="evidence" value="ECO:0007669"/>
    <property type="project" value="UniProtKB-UniRule"/>
</dbReference>
<dbReference type="FunFam" id="3.30.2300.20:FF:000001">
    <property type="entry name" value="Ribosomal RNA large subunit methyltransferase M"/>
    <property type="match status" value="1"/>
</dbReference>
<dbReference type="FunFam" id="3.30.70.2810:FF:000001">
    <property type="entry name" value="Ribosomal RNA large subunit methyltransferase M"/>
    <property type="match status" value="1"/>
</dbReference>
<dbReference type="FunFam" id="3.40.50.150:FF:000020">
    <property type="entry name" value="Ribosomal RNA large subunit methyltransferase M"/>
    <property type="match status" value="1"/>
</dbReference>
<dbReference type="Gene3D" id="3.30.2300.20">
    <property type="match status" value="1"/>
</dbReference>
<dbReference type="Gene3D" id="3.30.70.2810">
    <property type="match status" value="1"/>
</dbReference>
<dbReference type="Gene3D" id="3.40.50.150">
    <property type="entry name" value="Vaccinia Virus protein VP39"/>
    <property type="match status" value="1"/>
</dbReference>
<dbReference type="HAMAP" id="MF_01551">
    <property type="entry name" value="23SrRNA_methyltr_M"/>
    <property type="match status" value="1"/>
</dbReference>
<dbReference type="InterPro" id="IPR040739">
    <property type="entry name" value="RlmM_FDX"/>
</dbReference>
<dbReference type="InterPro" id="IPR048646">
    <property type="entry name" value="RlmM_THUMP-like"/>
</dbReference>
<dbReference type="InterPro" id="IPR002877">
    <property type="entry name" value="RNA_MeTrfase_FtsJ_dom"/>
</dbReference>
<dbReference type="InterPro" id="IPR011224">
    <property type="entry name" value="rRNA_MeTrfase_M"/>
</dbReference>
<dbReference type="InterPro" id="IPR029063">
    <property type="entry name" value="SAM-dependent_MTases_sf"/>
</dbReference>
<dbReference type="NCBIfam" id="NF008734">
    <property type="entry name" value="PRK11760.1"/>
    <property type="match status" value="1"/>
</dbReference>
<dbReference type="PANTHER" id="PTHR37524">
    <property type="entry name" value="RIBOSOMAL RNA LARGE SUBUNIT METHYLTRANSFERASE M"/>
    <property type="match status" value="1"/>
</dbReference>
<dbReference type="PANTHER" id="PTHR37524:SF2">
    <property type="entry name" value="RIBOSOMAL RNA METHYLTRANSFERASE FTSJ DOMAIN-CONTAINING PROTEIN"/>
    <property type="match status" value="1"/>
</dbReference>
<dbReference type="Pfam" id="PF01728">
    <property type="entry name" value="FtsJ"/>
    <property type="match status" value="1"/>
</dbReference>
<dbReference type="Pfam" id="PF18125">
    <property type="entry name" value="RlmM_FDX"/>
    <property type="match status" value="1"/>
</dbReference>
<dbReference type="Pfam" id="PF21239">
    <property type="entry name" value="RLMM_N"/>
    <property type="match status" value="1"/>
</dbReference>
<dbReference type="PIRSF" id="PIRSF028774">
    <property type="entry name" value="UCP028774"/>
    <property type="match status" value="1"/>
</dbReference>
<dbReference type="SUPFAM" id="SSF53335">
    <property type="entry name" value="S-adenosyl-L-methionine-dependent methyltransferases"/>
    <property type="match status" value="1"/>
</dbReference>
<feature type="chain" id="PRO_1000201517" description="Ribosomal RNA large subunit methyltransferase M">
    <location>
        <begin position="1"/>
        <end position="366"/>
    </location>
</feature>
<feature type="active site" description="Proton acceptor" evidence="1">
    <location>
        <position position="306"/>
    </location>
</feature>
<feature type="binding site" evidence="1">
    <location>
        <position position="188"/>
    </location>
    <ligand>
        <name>S-adenosyl-L-methionine</name>
        <dbReference type="ChEBI" id="CHEBI:59789"/>
    </ligand>
</feature>
<feature type="binding site" evidence="1">
    <location>
        <begin position="221"/>
        <end position="224"/>
    </location>
    <ligand>
        <name>S-adenosyl-L-methionine</name>
        <dbReference type="ChEBI" id="CHEBI:59789"/>
    </ligand>
</feature>
<feature type="binding site" evidence="1">
    <location>
        <position position="240"/>
    </location>
    <ligand>
        <name>S-adenosyl-L-methionine</name>
        <dbReference type="ChEBI" id="CHEBI:59789"/>
    </ligand>
</feature>
<feature type="binding site" evidence="1">
    <location>
        <position position="260"/>
    </location>
    <ligand>
        <name>S-adenosyl-L-methionine</name>
        <dbReference type="ChEBI" id="CHEBI:59789"/>
    </ligand>
</feature>
<feature type="binding site" evidence="1">
    <location>
        <position position="277"/>
    </location>
    <ligand>
        <name>S-adenosyl-L-methionine</name>
        <dbReference type="ChEBI" id="CHEBI:59789"/>
    </ligand>
</feature>